<name>NTPPA_CALS4</name>
<feature type="chain" id="PRO_0000123067" description="dTTP/UTP pyrophosphatase">
    <location>
        <begin position="1"/>
        <end position="207"/>
    </location>
</feature>
<feature type="active site" description="Proton acceptor" evidence="1">
    <location>
        <position position="71"/>
    </location>
</feature>
<feature type="site" description="Important for substrate specificity" evidence="1">
    <location>
        <position position="14"/>
    </location>
</feature>
<feature type="site" description="Important for substrate specificity" evidence="1">
    <location>
        <position position="72"/>
    </location>
</feature>
<feature type="site" description="Important for substrate specificity" evidence="1">
    <location>
        <position position="156"/>
    </location>
</feature>
<gene>
    <name type="primary">maf</name>
    <name type="ordered locus">TTE0896</name>
</gene>
<organism>
    <name type="scientific">Caldanaerobacter subterraneus subsp. tengcongensis (strain DSM 15242 / JCM 11007 / NBRC 100824 / MB4)</name>
    <name type="common">Thermoanaerobacter tengcongensis</name>
    <dbReference type="NCBI Taxonomy" id="273068"/>
    <lineage>
        <taxon>Bacteria</taxon>
        <taxon>Bacillati</taxon>
        <taxon>Bacillota</taxon>
        <taxon>Clostridia</taxon>
        <taxon>Thermoanaerobacterales</taxon>
        <taxon>Thermoanaerobacteraceae</taxon>
        <taxon>Caldanaerobacter</taxon>
    </lineage>
</organism>
<comment type="function">
    <text evidence="1">Nucleoside triphosphate pyrophosphatase that hydrolyzes dTTP and UTP. May have a dual role in cell division arrest and in preventing the incorporation of modified nucleotides into cellular nucleic acids.</text>
</comment>
<comment type="catalytic activity">
    <reaction evidence="1">
        <text>dTTP + H2O = dTMP + diphosphate + H(+)</text>
        <dbReference type="Rhea" id="RHEA:28534"/>
        <dbReference type="ChEBI" id="CHEBI:15377"/>
        <dbReference type="ChEBI" id="CHEBI:15378"/>
        <dbReference type="ChEBI" id="CHEBI:33019"/>
        <dbReference type="ChEBI" id="CHEBI:37568"/>
        <dbReference type="ChEBI" id="CHEBI:63528"/>
        <dbReference type="EC" id="3.6.1.9"/>
    </reaction>
</comment>
<comment type="catalytic activity">
    <reaction evidence="1">
        <text>UTP + H2O = UMP + diphosphate + H(+)</text>
        <dbReference type="Rhea" id="RHEA:29395"/>
        <dbReference type="ChEBI" id="CHEBI:15377"/>
        <dbReference type="ChEBI" id="CHEBI:15378"/>
        <dbReference type="ChEBI" id="CHEBI:33019"/>
        <dbReference type="ChEBI" id="CHEBI:46398"/>
        <dbReference type="ChEBI" id="CHEBI:57865"/>
        <dbReference type="EC" id="3.6.1.9"/>
    </reaction>
</comment>
<comment type="cofactor">
    <cofactor evidence="1">
        <name>a divalent metal cation</name>
        <dbReference type="ChEBI" id="CHEBI:60240"/>
    </cofactor>
</comment>
<comment type="subcellular location">
    <subcellularLocation>
        <location evidence="1">Cytoplasm</location>
    </subcellularLocation>
</comment>
<comment type="similarity">
    <text evidence="1">Belongs to the Maf family. YhdE subfamily.</text>
</comment>
<accession>Q8RBC6</accession>
<dbReference type="EC" id="3.6.1.9" evidence="1"/>
<dbReference type="EMBL" id="AE008691">
    <property type="protein sequence ID" value="AAM24152.1"/>
    <property type="molecule type" value="Genomic_DNA"/>
</dbReference>
<dbReference type="SMR" id="Q8RBC6"/>
<dbReference type="STRING" id="273068.TTE0896"/>
<dbReference type="KEGG" id="tte:TTE0896"/>
<dbReference type="eggNOG" id="COG0424">
    <property type="taxonomic scope" value="Bacteria"/>
</dbReference>
<dbReference type="HOGENOM" id="CLU_040416_0_0_9"/>
<dbReference type="Proteomes" id="UP000000555">
    <property type="component" value="Chromosome"/>
</dbReference>
<dbReference type="GO" id="GO:0005737">
    <property type="term" value="C:cytoplasm"/>
    <property type="evidence" value="ECO:0007669"/>
    <property type="project" value="UniProtKB-SubCell"/>
</dbReference>
<dbReference type="GO" id="GO:0036218">
    <property type="term" value="F:dTTP diphosphatase activity"/>
    <property type="evidence" value="ECO:0007669"/>
    <property type="project" value="RHEA"/>
</dbReference>
<dbReference type="GO" id="GO:0036221">
    <property type="term" value="F:UTP diphosphatase activity"/>
    <property type="evidence" value="ECO:0007669"/>
    <property type="project" value="RHEA"/>
</dbReference>
<dbReference type="GO" id="GO:0009117">
    <property type="term" value="P:nucleotide metabolic process"/>
    <property type="evidence" value="ECO:0007669"/>
    <property type="project" value="UniProtKB-KW"/>
</dbReference>
<dbReference type="CDD" id="cd00555">
    <property type="entry name" value="Maf"/>
    <property type="match status" value="1"/>
</dbReference>
<dbReference type="FunFam" id="3.90.950.10:FF:000005">
    <property type="entry name" value="7-methyl-GTP pyrophosphatase"/>
    <property type="match status" value="1"/>
</dbReference>
<dbReference type="Gene3D" id="3.90.950.10">
    <property type="match status" value="1"/>
</dbReference>
<dbReference type="HAMAP" id="MF_00528">
    <property type="entry name" value="Maf"/>
    <property type="match status" value="1"/>
</dbReference>
<dbReference type="InterPro" id="IPR029001">
    <property type="entry name" value="ITPase-like_fam"/>
</dbReference>
<dbReference type="InterPro" id="IPR003697">
    <property type="entry name" value="Maf-like"/>
</dbReference>
<dbReference type="NCBIfam" id="TIGR00172">
    <property type="entry name" value="maf"/>
    <property type="match status" value="1"/>
</dbReference>
<dbReference type="PANTHER" id="PTHR43213">
    <property type="entry name" value="BIFUNCTIONAL DTTP/UTP PYROPHOSPHATASE/METHYLTRANSFERASE PROTEIN-RELATED"/>
    <property type="match status" value="1"/>
</dbReference>
<dbReference type="PANTHER" id="PTHR43213:SF5">
    <property type="entry name" value="BIFUNCTIONAL DTTP_UTP PYROPHOSPHATASE_METHYLTRANSFERASE PROTEIN-RELATED"/>
    <property type="match status" value="1"/>
</dbReference>
<dbReference type="Pfam" id="PF02545">
    <property type="entry name" value="Maf"/>
    <property type="match status" value="1"/>
</dbReference>
<dbReference type="PIRSF" id="PIRSF006305">
    <property type="entry name" value="Maf"/>
    <property type="match status" value="1"/>
</dbReference>
<dbReference type="SUPFAM" id="SSF52972">
    <property type="entry name" value="ITPase-like"/>
    <property type="match status" value="1"/>
</dbReference>
<proteinExistence type="inferred from homology"/>
<evidence type="ECO:0000255" key="1">
    <source>
        <dbReference type="HAMAP-Rule" id="MF_00528"/>
    </source>
</evidence>
<sequence>MGCMKIFLASKSPRRRELLENLNFPFQIVENDIEEVSSEKEPSKYVMDLAFKKALKAAENIKEEAIVIAADTIVVVDGEILGKPKDREEAFSMLKTLQGREHIVYTGIAVIKLPEMKHSVDYQETKVWIRRLEDEDISNYIDTGECWDKAGAYAIQGFGSLIVEKIEGDYFNVVGLPVAKLFDLLKREFGVKWVGRGFEYKDKRLAL</sequence>
<protein>
    <recommendedName>
        <fullName evidence="1">dTTP/UTP pyrophosphatase</fullName>
        <shortName evidence="1">dTTPase/UTPase</shortName>
        <ecNumber evidence="1">3.6.1.9</ecNumber>
    </recommendedName>
    <alternativeName>
        <fullName evidence="1">Nucleoside triphosphate pyrophosphatase</fullName>
    </alternativeName>
    <alternativeName>
        <fullName evidence="1">Nucleotide pyrophosphatase</fullName>
        <shortName evidence="1">Nucleotide PPase</shortName>
    </alternativeName>
</protein>
<keyword id="KW-0963">Cytoplasm</keyword>
<keyword id="KW-0378">Hydrolase</keyword>
<keyword id="KW-0546">Nucleotide metabolism</keyword>
<keyword id="KW-1185">Reference proteome</keyword>
<reference key="1">
    <citation type="journal article" date="2002" name="Genome Res.">
        <title>A complete sequence of the T. tengcongensis genome.</title>
        <authorList>
            <person name="Bao Q."/>
            <person name="Tian Y."/>
            <person name="Li W."/>
            <person name="Xu Z."/>
            <person name="Xuan Z."/>
            <person name="Hu S."/>
            <person name="Dong W."/>
            <person name="Yang J."/>
            <person name="Chen Y."/>
            <person name="Xue Y."/>
            <person name="Xu Y."/>
            <person name="Lai X."/>
            <person name="Huang L."/>
            <person name="Dong X."/>
            <person name="Ma Y."/>
            <person name="Ling L."/>
            <person name="Tan H."/>
            <person name="Chen R."/>
            <person name="Wang J."/>
            <person name="Yu J."/>
            <person name="Yang H."/>
        </authorList>
    </citation>
    <scope>NUCLEOTIDE SEQUENCE [LARGE SCALE GENOMIC DNA]</scope>
    <source>
        <strain>DSM 15242 / JCM 11007 / NBRC 100824 / MB4</strain>
    </source>
</reference>